<sequence>MDLATKYFNQINWRYVDHSSGLEPMQSFAFDDTFSESVGKDLSCNVVRTWIHQHTVILGIHDSRLPFLSDGIRFLTDEQGYNAIVRNSGGLGVVLDQGILNISLIFKGQTETTIDEAFTVMYLLISKMFEDEDVSIDTKEIEQSYCPGKFDLSINDKKFAGISQRRVRGGIAVQIYLCIEGSGSERALMMQQFYQRALKGQTTKFHYPDIDPSCMASLETLLNREIKVQDVMFLLLYALKDLGANLNMDPITEDEWTRYEGYYDKMLERNAKINEKLDF</sequence>
<reference key="1">
    <citation type="journal article" date="2005" name="J. Bacteriol.">
        <title>Insights on evolution of virulence and resistance from the complete genome analysis of an early methicillin-resistant Staphylococcus aureus strain and a biofilm-producing methicillin-resistant Staphylococcus epidermidis strain.</title>
        <authorList>
            <person name="Gill S.R."/>
            <person name="Fouts D.E."/>
            <person name="Archer G.L."/>
            <person name="Mongodin E.F."/>
            <person name="DeBoy R.T."/>
            <person name="Ravel J."/>
            <person name="Paulsen I.T."/>
            <person name="Kolonay J.F."/>
            <person name="Brinkac L.M."/>
            <person name="Beanan M.J."/>
            <person name="Dodson R.J."/>
            <person name="Daugherty S.C."/>
            <person name="Madupu R."/>
            <person name="Angiuoli S.V."/>
            <person name="Durkin A.S."/>
            <person name="Haft D.H."/>
            <person name="Vamathevan J.J."/>
            <person name="Khouri H."/>
            <person name="Utterback T.R."/>
            <person name="Lee C."/>
            <person name="Dimitrov G."/>
            <person name="Jiang L."/>
            <person name="Qin H."/>
            <person name="Weidman J."/>
            <person name="Tran K."/>
            <person name="Kang K.H."/>
            <person name="Hance I.R."/>
            <person name="Nelson K.E."/>
            <person name="Fraser C.M."/>
        </authorList>
    </citation>
    <scope>NUCLEOTIDE SEQUENCE [LARGE SCALE GENOMIC DNA]</scope>
    <source>
        <strain>ATCC 35984 / DSM 28319 / BCRC 17069 / CCUG 31568 / BM 3577 / RP62A</strain>
    </source>
</reference>
<proteinExistence type="inferred from homology"/>
<gene>
    <name evidence="1" type="primary">lipL</name>
    <name type="ordered locus">SERP0237</name>
</gene>
<organism>
    <name type="scientific">Staphylococcus epidermidis (strain ATCC 35984 / DSM 28319 / BCRC 17069 / CCUG 31568 / BM 3577 / RP62A)</name>
    <dbReference type="NCBI Taxonomy" id="176279"/>
    <lineage>
        <taxon>Bacteria</taxon>
        <taxon>Bacillati</taxon>
        <taxon>Bacillota</taxon>
        <taxon>Bacilli</taxon>
        <taxon>Bacillales</taxon>
        <taxon>Staphylococcaceae</taxon>
        <taxon>Staphylococcus</taxon>
    </lineage>
</organism>
<keyword id="KW-0012">Acyltransferase</keyword>
<keyword id="KW-1185">Reference proteome</keyword>
<keyword id="KW-0808">Transferase</keyword>
<comment type="function">
    <text evidence="1">Catalyzes the amidotransfer (transamidation) of the octanoyl moiety from octanoyl-GcvH to the lipoyl domain of the E2 subunit of lipoate-dependent enzymes.</text>
</comment>
<comment type="catalytic activity">
    <reaction evidence="1">
        <text>N(6)-octanoyl-L-lysyl-[glycine-cleavage complex H protein] + L-lysyl-[lipoyl-carrier protein] = N(6)-octanoyl-L-lysyl-[lipoyl-carrier protein] + L-lysyl-[glycine-cleavage complex H protein]</text>
        <dbReference type="Rhea" id="RHEA:20213"/>
        <dbReference type="Rhea" id="RHEA-COMP:10500"/>
        <dbReference type="Rhea" id="RHEA-COMP:10501"/>
        <dbReference type="Rhea" id="RHEA-COMP:10503"/>
        <dbReference type="Rhea" id="RHEA-COMP:10504"/>
        <dbReference type="ChEBI" id="CHEBI:29969"/>
        <dbReference type="ChEBI" id="CHEBI:78809"/>
        <dbReference type="EC" id="2.3.1.204"/>
    </reaction>
</comment>
<comment type="pathway">
    <text evidence="1">Protein modification; protein lipoylation via endogenous pathway; protein N(6)-(lipoyl)lysine from octanoyl-[acyl-carrier-protein].</text>
</comment>
<comment type="miscellaneous">
    <text evidence="1">The reaction proceeds via a thioester-linked acyl-enzyme intermediate.</text>
</comment>
<comment type="similarity">
    <text evidence="1">Belongs to the octanoyltransferase LipL family.</text>
</comment>
<evidence type="ECO:0000255" key="1">
    <source>
        <dbReference type="HAMAP-Rule" id="MF_02119"/>
    </source>
</evidence>
<evidence type="ECO:0000255" key="2">
    <source>
        <dbReference type="PROSITE-ProRule" id="PRU01067"/>
    </source>
</evidence>
<feature type="chain" id="PRO_0000410846" description="Octanoyl-[GcvH]:protein N-octanoyltransferase">
    <location>
        <begin position="1"/>
        <end position="279"/>
    </location>
</feature>
<feature type="domain" description="BPL/LPL catalytic" evidence="2">
    <location>
        <begin position="41"/>
        <end position="247"/>
    </location>
</feature>
<feature type="active site" description="Acyl-thioester intermediate" evidence="1">
    <location>
        <position position="146"/>
    </location>
</feature>
<feature type="site" description="Lowers pKa of active site Cys" evidence="1">
    <location>
        <position position="158"/>
    </location>
</feature>
<name>LIPL_STAEQ</name>
<dbReference type="EC" id="2.3.1.204" evidence="1"/>
<dbReference type="EMBL" id="CP000029">
    <property type="protein sequence ID" value="AAW53632.1"/>
    <property type="molecule type" value="Genomic_DNA"/>
</dbReference>
<dbReference type="RefSeq" id="WP_002445773.1">
    <property type="nucleotide sequence ID" value="NC_002976.3"/>
</dbReference>
<dbReference type="SMR" id="Q5HRF6"/>
<dbReference type="STRING" id="176279.SERP0237"/>
<dbReference type="KEGG" id="ser:SERP0237"/>
<dbReference type="eggNOG" id="COG0095">
    <property type="taxonomic scope" value="Bacteria"/>
</dbReference>
<dbReference type="HOGENOM" id="CLU_067270_0_0_9"/>
<dbReference type="Proteomes" id="UP000000531">
    <property type="component" value="Chromosome"/>
</dbReference>
<dbReference type="GO" id="GO:0033819">
    <property type="term" value="F:lipoyl(octanoyl) transferase activity"/>
    <property type="evidence" value="ECO:0007669"/>
    <property type="project" value="InterPro"/>
</dbReference>
<dbReference type="GO" id="GO:0009107">
    <property type="term" value="P:lipoate biosynthetic process"/>
    <property type="evidence" value="ECO:0007669"/>
    <property type="project" value="UniProtKB-UniRule"/>
</dbReference>
<dbReference type="GO" id="GO:0036211">
    <property type="term" value="P:protein modification process"/>
    <property type="evidence" value="ECO:0007669"/>
    <property type="project" value="InterPro"/>
</dbReference>
<dbReference type="CDD" id="cd16443">
    <property type="entry name" value="LplA"/>
    <property type="match status" value="1"/>
</dbReference>
<dbReference type="Gene3D" id="3.30.930.10">
    <property type="entry name" value="Bira Bifunctional Protein, Domain 2"/>
    <property type="match status" value="1"/>
</dbReference>
<dbReference type="HAMAP" id="MF_02119">
    <property type="entry name" value="LipL"/>
    <property type="match status" value="1"/>
</dbReference>
<dbReference type="InterPro" id="IPR045864">
    <property type="entry name" value="aa-tRNA-synth_II/BPL/LPL"/>
</dbReference>
<dbReference type="InterPro" id="IPR004143">
    <property type="entry name" value="BPL_LPL_catalytic"/>
</dbReference>
<dbReference type="InterPro" id="IPR024897">
    <property type="entry name" value="LipL"/>
</dbReference>
<dbReference type="InterPro" id="IPR050664">
    <property type="entry name" value="Octanoyltrans_LipM/LipL"/>
</dbReference>
<dbReference type="PANTHER" id="PTHR43679:SF2">
    <property type="entry name" value="OCTANOYL-[GCVH]:PROTEIN N-OCTANOYLTRANSFERASE"/>
    <property type="match status" value="1"/>
</dbReference>
<dbReference type="PANTHER" id="PTHR43679">
    <property type="entry name" value="OCTANOYLTRANSFERASE LIPM-RELATED"/>
    <property type="match status" value="1"/>
</dbReference>
<dbReference type="Pfam" id="PF21948">
    <property type="entry name" value="LplA-B_cat"/>
    <property type="match status" value="1"/>
</dbReference>
<dbReference type="SUPFAM" id="SSF55681">
    <property type="entry name" value="Class II aaRS and biotin synthetases"/>
    <property type="match status" value="1"/>
</dbReference>
<dbReference type="PROSITE" id="PS51733">
    <property type="entry name" value="BPL_LPL_CATALYTIC"/>
    <property type="match status" value="1"/>
</dbReference>
<accession>Q5HRF6</accession>
<protein>
    <recommendedName>
        <fullName evidence="1">Octanoyl-[GcvH]:protein N-octanoyltransferase</fullName>
        <ecNumber evidence="1">2.3.1.204</ecNumber>
    </recommendedName>
    <alternativeName>
        <fullName evidence="1">Octanoyl-[GcvH]:E2 amidotransferase</fullName>
    </alternativeName>
</protein>